<accession>Q5M159</accession>
<name>RL21_STRT1</name>
<organism>
    <name type="scientific">Streptococcus thermophilus (strain CNRZ 1066)</name>
    <dbReference type="NCBI Taxonomy" id="299768"/>
    <lineage>
        <taxon>Bacteria</taxon>
        <taxon>Bacillati</taxon>
        <taxon>Bacillota</taxon>
        <taxon>Bacilli</taxon>
        <taxon>Lactobacillales</taxon>
        <taxon>Streptococcaceae</taxon>
        <taxon>Streptococcus</taxon>
    </lineage>
</organism>
<protein>
    <recommendedName>
        <fullName evidence="1">Large ribosomal subunit protein bL21</fullName>
    </recommendedName>
    <alternativeName>
        <fullName evidence="2">50S ribosomal protein L21</fullName>
    </alternativeName>
</protein>
<gene>
    <name evidence="1" type="primary">rplU</name>
    <name type="ordered locus">str0417</name>
</gene>
<evidence type="ECO:0000255" key="1">
    <source>
        <dbReference type="HAMAP-Rule" id="MF_01363"/>
    </source>
</evidence>
<evidence type="ECO:0000305" key="2"/>
<dbReference type="EMBL" id="CP000024">
    <property type="protein sequence ID" value="AAV62018.1"/>
    <property type="status" value="ALT_INIT"/>
    <property type="molecule type" value="Genomic_DNA"/>
</dbReference>
<dbReference type="RefSeq" id="WP_002885597.1">
    <property type="nucleotide sequence ID" value="NC_006449.1"/>
</dbReference>
<dbReference type="SMR" id="Q5M159"/>
<dbReference type="GeneID" id="93791586"/>
<dbReference type="KEGG" id="stc:str0417"/>
<dbReference type="HOGENOM" id="CLU_061463_3_1_9"/>
<dbReference type="GO" id="GO:0005737">
    <property type="term" value="C:cytoplasm"/>
    <property type="evidence" value="ECO:0007669"/>
    <property type="project" value="UniProtKB-ARBA"/>
</dbReference>
<dbReference type="GO" id="GO:1990904">
    <property type="term" value="C:ribonucleoprotein complex"/>
    <property type="evidence" value="ECO:0007669"/>
    <property type="project" value="UniProtKB-KW"/>
</dbReference>
<dbReference type="GO" id="GO:0005840">
    <property type="term" value="C:ribosome"/>
    <property type="evidence" value="ECO:0007669"/>
    <property type="project" value="UniProtKB-KW"/>
</dbReference>
<dbReference type="GO" id="GO:0019843">
    <property type="term" value="F:rRNA binding"/>
    <property type="evidence" value="ECO:0007669"/>
    <property type="project" value="UniProtKB-UniRule"/>
</dbReference>
<dbReference type="GO" id="GO:0003735">
    <property type="term" value="F:structural constituent of ribosome"/>
    <property type="evidence" value="ECO:0007669"/>
    <property type="project" value="InterPro"/>
</dbReference>
<dbReference type="GO" id="GO:0006412">
    <property type="term" value="P:translation"/>
    <property type="evidence" value="ECO:0007669"/>
    <property type="project" value="UniProtKB-UniRule"/>
</dbReference>
<dbReference type="HAMAP" id="MF_01363">
    <property type="entry name" value="Ribosomal_bL21"/>
    <property type="match status" value="1"/>
</dbReference>
<dbReference type="InterPro" id="IPR028909">
    <property type="entry name" value="bL21-like"/>
</dbReference>
<dbReference type="InterPro" id="IPR036164">
    <property type="entry name" value="bL21-like_sf"/>
</dbReference>
<dbReference type="InterPro" id="IPR001787">
    <property type="entry name" value="Ribosomal_bL21"/>
</dbReference>
<dbReference type="InterPro" id="IPR018258">
    <property type="entry name" value="Ribosomal_bL21_CS"/>
</dbReference>
<dbReference type="NCBIfam" id="TIGR00061">
    <property type="entry name" value="L21"/>
    <property type="match status" value="1"/>
</dbReference>
<dbReference type="PANTHER" id="PTHR21349">
    <property type="entry name" value="50S RIBOSOMAL PROTEIN L21"/>
    <property type="match status" value="1"/>
</dbReference>
<dbReference type="PANTHER" id="PTHR21349:SF0">
    <property type="entry name" value="LARGE RIBOSOMAL SUBUNIT PROTEIN BL21M"/>
    <property type="match status" value="1"/>
</dbReference>
<dbReference type="Pfam" id="PF00829">
    <property type="entry name" value="Ribosomal_L21p"/>
    <property type="match status" value="1"/>
</dbReference>
<dbReference type="SUPFAM" id="SSF141091">
    <property type="entry name" value="L21p-like"/>
    <property type="match status" value="1"/>
</dbReference>
<dbReference type="PROSITE" id="PS01169">
    <property type="entry name" value="RIBOSOMAL_L21"/>
    <property type="match status" value="1"/>
</dbReference>
<reference key="1">
    <citation type="journal article" date="2004" name="Nat. Biotechnol.">
        <title>Complete sequence and comparative genome analysis of the dairy bacterium Streptococcus thermophilus.</title>
        <authorList>
            <person name="Bolotin A."/>
            <person name="Quinquis B."/>
            <person name="Renault P."/>
            <person name="Sorokin A."/>
            <person name="Ehrlich S.D."/>
            <person name="Kulakauskas S."/>
            <person name="Lapidus A."/>
            <person name="Goltsman E."/>
            <person name="Mazur M."/>
            <person name="Pusch G.D."/>
            <person name="Fonstein M."/>
            <person name="Overbeek R."/>
            <person name="Kyprides N."/>
            <person name="Purnelle B."/>
            <person name="Prozzi D."/>
            <person name="Ngui K."/>
            <person name="Masuy D."/>
            <person name="Hancy F."/>
            <person name="Burteau S."/>
            <person name="Boutry M."/>
            <person name="Delcour J."/>
            <person name="Goffeau A."/>
            <person name="Hols P."/>
        </authorList>
    </citation>
    <scope>NUCLEOTIDE SEQUENCE [LARGE SCALE GENOMIC DNA]</scope>
    <source>
        <strain>CNRZ 1066</strain>
    </source>
</reference>
<feature type="chain" id="PRO_0000269403" description="Large ribosomal subunit protein bL21">
    <location>
        <begin position="1"/>
        <end position="104"/>
    </location>
</feature>
<sequence>MSTYAIIKTGGKQVKVEVGQAIYVEKINAEAGSEVTFNEVVLVGGDKTVVGTPVVEGATVVGTIEKQGKQKKVVTFKYKPKKGSHRKQGHRQPYTKVVINAINA</sequence>
<proteinExistence type="inferred from homology"/>
<keyword id="KW-0687">Ribonucleoprotein</keyword>
<keyword id="KW-0689">Ribosomal protein</keyword>
<keyword id="KW-0694">RNA-binding</keyword>
<keyword id="KW-0699">rRNA-binding</keyword>
<comment type="function">
    <text evidence="1">This protein binds to 23S rRNA in the presence of protein L20.</text>
</comment>
<comment type="subunit">
    <text evidence="1">Part of the 50S ribosomal subunit. Contacts protein L20.</text>
</comment>
<comment type="similarity">
    <text evidence="1">Belongs to the bacterial ribosomal protein bL21 family.</text>
</comment>
<comment type="sequence caution" evidence="2">
    <conflict type="erroneous initiation">
        <sequence resource="EMBL-CDS" id="AAV62018"/>
    </conflict>
</comment>